<proteinExistence type="inferred from homology"/>
<protein>
    <recommendedName>
        <fullName evidence="1">Small ribosomal subunit protein uS5</fullName>
    </recommendedName>
    <alternativeName>
        <fullName evidence="2">30S ribosomal protein S5</fullName>
    </alternativeName>
</protein>
<evidence type="ECO:0000255" key="1">
    <source>
        <dbReference type="HAMAP-Rule" id="MF_01307"/>
    </source>
</evidence>
<evidence type="ECO:0000305" key="2"/>
<dbReference type="EMBL" id="CP000675">
    <property type="protein sequence ID" value="ABQ56897.1"/>
    <property type="molecule type" value="Genomic_DNA"/>
</dbReference>
<dbReference type="RefSeq" id="WP_010946095.1">
    <property type="nucleotide sequence ID" value="NZ_JAPMSS010000006.1"/>
</dbReference>
<dbReference type="SMR" id="A5IHP7"/>
<dbReference type="GeneID" id="57034349"/>
<dbReference type="KEGG" id="lpc:LPC_2996"/>
<dbReference type="HOGENOM" id="CLU_065898_2_2_6"/>
<dbReference type="GO" id="GO:0015935">
    <property type="term" value="C:small ribosomal subunit"/>
    <property type="evidence" value="ECO:0007669"/>
    <property type="project" value="InterPro"/>
</dbReference>
<dbReference type="GO" id="GO:0019843">
    <property type="term" value="F:rRNA binding"/>
    <property type="evidence" value="ECO:0007669"/>
    <property type="project" value="UniProtKB-UniRule"/>
</dbReference>
<dbReference type="GO" id="GO:0003735">
    <property type="term" value="F:structural constituent of ribosome"/>
    <property type="evidence" value="ECO:0007669"/>
    <property type="project" value="InterPro"/>
</dbReference>
<dbReference type="GO" id="GO:0006412">
    <property type="term" value="P:translation"/>
    <property type="evidence" value="ECO:0007669"/>
    <property type="project" value="UniProtKB-UniRule"/>
</dbReference>
<dbReference type="FunFam" id="3.30.160.20:FF:000001">
    <property type="entry name" value="30S ribosomal protein S5"/>
    <property type="match status" value="1"/>
</dbReference>
<dbReference type="FunFam" id="3.30.230.10:FF:000002">
    <property type="entry name" value="30S ribosomal protein S5"/>
    <property type="match status" value="1"/>
</dbReference>
<dbReference type="Gene3D" id="3.30.160.20">
    <property type="match status" value="1"/>
</dbReference>
<dbReference type="Gene3D" id="3.30.230.10">
    <property type="match status" value="1"/>
</dbReference>
<dbReference type="HAMAP" id="MF_01307_B">
    <property type="entry name" value="Ribosomal_uS5_B"/>
    <property type="match status" value="1"/>
</dbReference>
<dbReference type="InterPro" id="IPR020568">
    <property type="entry name" value="Ribosomal_Su5_D2-typ_SF"/>
</dbReference>
<dbReference type="InterPro" id="IPR000851">
    <property type="entry name" value="Ribosomal_uS5"/>
</dbReference>
<dbReference type="InterPro" id="IPR005712">
    <property type="entry name" value="Ribosomal_uS5_bac-type"/>
</dbReference>
<dbReference type="InterPro" id="IPR005324">
    <property type="entry name" value="Ribosomal_uS5_C"/>
</dbReference>
<dbReference type="InterPro" id="IPR013810">
    <property type="entry name" value="Ribosomal_uS5_N"/>
</dbReference>
<dbReference type="InterPro" id="IPR018192">
    <property type="entry name" value="Ribosomal_uS5_N_CS"/>
</dbReference>
<dbReference type="InterPro" id="IPR014721">
    <property type="entry name" value="Ribsml_uS5_D2-typ_fold_subgr"/>
</dbReference>
<dbReference type="NCBIfam" id="TIGR01021">
    <property type="entry name" value="rpsE_bact"/>
    <property type="match status" value="1"/>
</dbReference>
<dbReference type="PANTHER" id="PTHR48277">
    <property type="entry name" value="MITOCHONDRIAL RIBOSOMAL PROTEIN S5"/>
    <property type="match status" value="1"/>
</dbReference>
<dbReference type="PANTHER" id="PTHR48277:SF1">
    <property type="entry name" value="MITOCHONDRIAL RIBOSOMAL PROTEIN S5"/>
    <property type="match status" value="1"/>
</dbReference>
<dbReference type="Pfam" id="PF00333">
    <property type="entry name" value="Ribosomal_S5"/>
    <property type="match status" value="1"/>
</dbReference>
<dbReference type="Pfam" id="PF03719">
    <property type="entry name" value="Ribosomal_S5_C"/>
    <property type="match status" value="1"/>
</dbReference>
<dbReference type="SUPFAM" id="SSF54768">
    <property type="entry name" value="dsRNA-binding domain-like"/>
    <property type="match status" value="1"/>
</dbReference>
<dbReference type="SUPFAM" id="SSF54211">
    <property type="entry name" value="Ribosomal protein S5 domain 2-like"/>
    <property type="match status" value="1"/>
</dbReference>
<dbReference type="PROSITE" id="PS00585">
    <property type="entry name" value="RIBOSOMAL_S5"/>
    <property type="match status" value="1"/>
</dbReference>
<dbReference type="PROSITE" id="PS50881">
    <property type="entry name" value="S5_DSRBD"/>
    <property type="match status" value="1"/>
</dbReference>
<name>RS5_LEGPC</name>
<feature type="chain" id="PRO_0000323148" description="Small ribosomal subunit protein uS5">
    <location>
        <begin position="1"/>
        <end position="168"/>
    </location>
</feature>
<feature type="domain" description="S5 DRBM" evidence="1">
    <location>
        <begin position="12"/>
        <end position="75"/>
    </location>
</feature>
<organism>
    <name type="scientific">Legionella pneumophila (strain Corby)</name>
    <dbReference type="NCBI Taxonomy" id="400673"/>
    <lineage>
        <taxon>Bacteria</taxon>
        <taxon>Pseudomonadati</taxon>
        <taxon>Pseudomonadota</taxon>
        <taxon>Gammaproteobacteria</taxon>
        <taxon>Legionellales</taxon>
        <taxon>Legionellaceae</taxon>
        <taxon>Legionella</taxon>
    </lineage>
</organism>
<comment type="function">
    <text evidence="1">With S4 and S12 plays an important role in translational accuracy.</text>
</comment>
<comment type="function">
    <text evidence="1">Located at the back of the 30S subunit body where it stabilizes the conformation of the head with respect to the body.</text>
</comment>
<comment type="subunit">
    <text evidence="1">Part of the 30S ribosomal subunit. Contacts proteins S4 and S8.</text>
</comment>
<comment type="domain">
    <text>The N-terminal domain interacts with the head of the 30S subunit; the C-terminal domain interacts with the body and contacts protein S4. The interaction surface between S4 and S5 is involved in control of translational fidelity.</text>
</comment>
<comment type="similarity">
    <text evidence="1">Belongs to the universal ribosomal protein uS5 family.</text>
</comment>
<accession>A5IHP7</accession>
<gene>
    <name evidence="1" type="primary">rpsE</name>
    <name type="ordered locus">LPC_2996</name>
</gene>
<keyword id="KW-0687">Ribonucleoprotein</keyword>
<keyword id="KW-0689">Ribosomal protein</keyword>
<keyword id="KW-0694">RNA-binding</keyword>
<keyword id="KW-0699">rRNA-binding</keyword>
<sequence>MSFDELPKSDGYQEKLVSVTRTAKVVKGGRVFGFAVLVVVGDGKGKVGFGRGKAREVPIAIQKAMDQAKKNMVYIPLSGTTIFHEITWNYGASKVFMKPASEGTGIIAGGAMRAVLEVLGVQNILAKSIGSTNPSNIVRATIGALTHIGTPDYVAAKRGKTVEEVMAG</sequence>
<reference key="1">
    <citation type="submission" date="2006-11" db="EMBL/GenBank/DDBJ databases">
        <title>Identification and characterization of a new conjugation/ type IVA secretion system (trb/tra) of L. pneumophila Corby localized on a mobile genomic island.</title>
        <authorList>
            <person name="Gloeckner G."/>
            <person name="Albert-Weissenberger C."/>
            <person name="Weinmann E."/>
            <person name="Jacobi S."/>
            <person name="Schunder E."/>
            <person name="Steinert M."/>
            <person name="Buchrieser C."/>
            <person name="Hacker J."/>
            <person name="Heuner K."/>
        </authorList>
    </citation>
    <scope>NUCLEOTIDE SEQUENCE [LARGE SCALE GENOMIC DNA]</scope>
    <source>
        <strain>Corby</strain>
    </source>
</reference>